<proteinExistence type="inferred from homology"/>
<protein>
    <recommendedName>
        <fullName>Penicillin-binding protein 1A</fullName>
        <shortName>PBP1a</shortName>
    </recommendedName>
    <domain>
        <recommendedName>
            <fullName>Penicillin-insensitive transglycosylase</fullName>
            <ecNumber evidence="2">2.4.99.28</ecNumber>
        </recommendedName>
        <alternativeName>
            <fullName>Peptidoglycan TGase</fullName>
        </alternativeName>
    </domain>
    <domain>
        <recommendedName>
            <fullName>Penicillin-sensitive transpeptidase</fullName>
            <ecNumber evidence="2">3.4.16.4</ecNumber>
        </recommendedName>
        <alternativeName>
            <fullName>DD-transpeptidase</fullName>
        </alternativeName>
    </domain>
</protein>
<reference key="1">
    <citation type="journal article" date="2003" name="Proc. Natl. Acad. Sci. U.S.A.">
        <title>The genome sequence of Clostridium tetani, the causative agent of tetanus disease.</title>
        <authorList>
            <person name="Brueggemann H."/>
            <person name="Baeumer S."/>
            <person name="Fricke W.F."/>
            <person name="Wiezer A."/>
            <person name="Liesegang H."/>
            <person name="Decker I."/>
            <person name="Herzberg C."/>
            <person name="Martinez-Arias R."/>
            <person name="Merkl R."/>
            <person name="Henne A."/>
            <person name="Gottschalk G."/>
        </authorList>
    </citation>
    <scope>NUCLEOTIDE SEQUENCE [LARGE SCALE GENOMIC DNA]</scope>
    <source>
        <strain>Massachusetts / E88</strain>
    </source>
</reference>
<name>PBPA_CLOTE</name>
<accession>Q891X1</accession>
<keyword id="KW-0046">Antibiotic resistance</keyword>
<keyword id="KW-0121">Carboxypeptidase</keyword>
<keyword id="KW-1003">Cell membrane</keyword>
<keyword id="KW-0133">Cell shape</keyword>
<keyword id="KW-0961">Cell wall biogenesis/degradation</keyword>
<keyword id="KW-0328">Glycosyltransferase</keyword>
<keyword id="KW-0378">Hydrolase</keyword>
<keyword id="KW-0472">Membrane</keyword>
<keyword id="KW-0511">Multifunctional enzyme</keyword>
<keyword id="KW-0573">Peptidoglycan synthesis</keyword>
<keyword id="KW-0645">Protease</keyword>
<keyword id="KW-1185">Reference proteome</keyword>
<keyword id="KW-0735">Signal-anchor</keyword>
<keyword id="KW-0808">Transferase</keyword>
<keyword id="KW-0812">Transmembrane</keyword>
<keyword id="KW-1133">Transmembrane helix</keyword>
<feature type="chain" id="PRO_0000321879" description="Penicillin-binding protein 1A">
    <location>
        <begin position="1"/>
        <end position="790"/>
    </location>
</feature>
<feature type="topological domain" description="Cytoplasmic" evidence="4">
    <location>
        <begin position="1"/>
        <end position="20"/>
    </location>
</feature>
<feature type="transmembrane region" description="Helical; Signal-anchor for type II membrane protein" evidence="4">
    <location>
        <begin position="21"/>
        <end position="41"/>
    </location>
</feature>
<feature type="topological domain" description="Extracellular" evidence="4">
    <location>
        <begin position="42"/>
        <end position="790"/>
    </location>
</feature>
<feature type="region of interest" description="Transglycosylase" evidence="1">
    <location>
        <begin position="61"/>
        <end position="230"/>
    </location>
</feature>
<feature type="region of interest" description="Transpeptidase" evidence="1">
    <location>
        <begin position="363"/>
        <end position="656"/>
    </location>
</feature>
<feature type="region of interest" description="Disordered" evidence="5">
    <location>
        <begin position="720"/>
        <end position="790"/>
    </location>
</feature>
<feature type="compositionally biased region" description="Acidic residues" evidence="5">
    <location>
        <begin position="724"/>
        <end position="740"/>
    </location>
</feature>
<feature type="compositionally biased region" description="Basic and acidic residues" evidence="5">
    <location>
        <begin position="741"/>
        <end position="779"/>
    </location>
</feature>
<feature type="compositionally biased region" description="Basic residues" evidence="5">
    <location>
        <begin position="780"/>
        <end position="790"/>
    </location>
</feature>
<feature type="active site" description="Proton donor; for transglycosylase activity" evidence="3">
    <location>
        <position position="100"/>
    </location>
</feature>
<feature type="active site" description="Acyl-ester intermediate; for transpeptidase activity" evidence="3">
    <location>
        <position position="402"/>
    </location>
</feature>
<gene>
    <name type="primary">pbpA</name>
    <name type="ordered locus">CTC_02242</name>
</gene>
<organism>
    <name type="scientific">Clostridium tetani (strain Massachusetts / E88)</name>
    <dbReference type="NCBI Taxonomy" id="212717"/>
    <lineage>
        <taxon>Bacteria</taxon>
        <taxon>Bacillati</taxon>
        <taxon>Bacillota</taxon>
        <taxon>Clostridia</taxon>
        <taxon>Eubacteriales</taxon>
        <taxon>Clostridiaceae</taxon>
        <taxon>Clostridium</taxon>
    </lineage>
</organism>
<evidence type="ECO:0000250" key="1"/>
<evidence type="ECO:0000250" key="2">
    <source>
        <dbReference type="UniProtKB" id="P02918"/>
    </source>
</evidence>
<evidence type="ECO:0000250" key="3">
    <source>
        <dbReference type="UniProtKB" id="P02919"/>
    </source>
</evidence>
<evidence type="ECO:0000255" key="4"/>
<evidence type="ECO:0000256" key="5">
    <source>
        <dbReference type="SAM" id="MobiDB-lite"/>
    </source>
</evidence>
<evidence type="ECO:0000305" key="6"/>
<dbReference type="EC" id="2.4.99.28" evidence="2"/>
<dbReference type="EC" id="3.4.16.4" evidence="2"/>
<dbReference type="EMBL" id="AE015927">
    <property type="protein sequence ID" value="AAO36724.1"/>
    <property type="molecule type" value="Genomic_DNA"/>
</dbReference>
<dbReference type="RefSeq" id="WP_011100385.1">
    <property type="nucleotide sequence ID" value="NC_004557.1"/>
</dbReference>
<dbReference type="SMR" id="Q891X1"/>
<dbReference type="STRING" id="212717.CTC_02242"/>
<dbReference type="CAZy" id="GT51">
    <property type="family name" value="Glycosyltransferase Family 51"/>
</dbReference>
<dbReference type="GeneID" id="24253764"/>
<dbReference type="KEGG" id="ctc:CTC_02242"/>
<dbReference type="HOGENOM" id="CLU_006354_2_2_9"/>
<dbReference type="OrthoDB" id="9766909at2"/>
<dbReference type="UniPathway" id="UPA00219"/>
<dbReference type="Proteomes" id="UP000001412">
    <property type="component" value="Chromosome"/>
</dbReference>
<dbReference type="GO" id="GO:0005886">
    <property type="term" value="C:plasma membrane"/>
    <property type="evidence" value="ECO:0007669"/>
    <property type="project" value="UniProtKB-SubCell"/>
</dbReference>
<dbReference type="GO" id="GO:0008658">
    <property type="term" value="F:penicillin binding"/>
    <property type="evidence" value="ECO:0007669"/>
    <property type="project" value="InterPro"/>
</dbReference>
<dbReference type="GO" id="GO:0008955">
    <property type="term" value="F:peptidoglycan glycosyltransferase activity"/>
    <property type="evidence" value="ECO:0007669"/>
    <property type="project" value="TreeGrafter"/>
</dbReference>
<dbReference type="GO" id="GO:0009002">
    <property type="term" value="F:serine-type D-Ala-D-Ala carboxypeptidase activity"/>
    <property type="evidence" value="ECO:0007669"/>
    <property type="project" value="UniProtKB-EC"/>
</dbReference>
<dbReference type="GO" id="GO:0071555">
    <property type="term" value="P:cell wall organization"/>
    <property type="evidence" value="ECO:0007669"/>
    <property type="project" value="UniProtKB-KW"/>
</dbReference>
<dbReference type="GO" id="GO:0009252">
    <property type="term" value="P:peptidoglycan biosynthetic process"/>
    <property type="evidence" value="ECO:0007669"/>
    <property type="project" value="UniProtKB-UniPathway"/>
</dbReference>
<dbReference type="GO" id="GO:0006508">
    <property type="term" value="P:proteolysis"/>
    <property type="evidence" value="ECO:0007669"/>
    <property type="project" value="UniProtKB-KW"/>
</dbReference>
<dbReference type="GO" id="GO:0008360">
    <property type="term" value="P:regulation of cell shape"/>
    <property type="evidence" value="ECO:0007669"/>
    <property type="project" value="UniProtKB-KW"/>
</dbReference>
<dbReference type="GO" id="GO:0046677">
    <property type="term" value="P:response to antibiotic"/>
    <property type="evidence" value="ECO:0007669"/>
    <property type="project" value="UniProtKB-KW"/>
</dbReference>
<dbReference type="FunFam" id="1.10.3810.10:FF:000001">
    <property type="entry name" value="Penicillin-binding protein 1A"/>
    <property type="match status" value="1"/>
</dbReference>
<dbReference type="Gene3D" id="1.10.3810.10">
    <property type="entry name" value="Biosynthetic peptidoglycan transglycosylase-like"/>
    <property type="match status" value="1"/>
</dbReference>
<dbReference type="Gene3D" id="3.40.710.10">
    <property type="entry name" value="DD-peptidase/beta-lactamase superfamily"/>
    <property type="match status" value="1"/>
</dbReference>
<dbReference type="InterPro" id="IPR012338">
    <property type="entry name" value="Beta-lactam/transpept-like"/>
</dbReference>
<dbReference type="InterPro" id="IPR001264">
    <property type="entry name" value="Glyco_trans_51"/>
</dbReference>
<dbReference type="InterPro" id="IPR050396">
    <property type="entry name" value="Glycosyltr_51/Transpeptidase"/>
</dbReference>
<dbReference type="InterPro" id="IPR023346">
    <property type="entry name" value="Lysozyme-like_dom_sf"/>
</dbReference>
<dbReference type="InterPro" id="IPR036950">
    <property type="entry name" value="PBP_transglycosylase"/>
</dbReference>
<dbReference type="InterPro" id="IPR001460">
    <property type="entry name" value="PCN-bd_Tpept"/>
</dbReference>
<dbReference type="NCBIfam" id="TIGR02074">
    <property type="entry name" value="PBP_1a_fam"/>
    <property type="match status" value="1"/>
</dbReference>
<dbReference type="PANTHER" id="PTHR32282">
    <property type="entry name" value="BINDING PROTEIN TRANSPEPTIDASE, PUTATIVE-RELATED"/>
    <property type="match status" value="1"/>
</dbReference>
<dbReference type="PANTHER" id="PTHR32282:SF33">
    <property type="entry name" value="PEPTIDOGLYCAN GLYCOSYLTRANSFERASE"/>
    <property type="match status" value="1"/>
</dbReference>
<dbReference type="Pfam" id="PF00912">
    <property type="entry name" value="Transgly"/>
    <property type="match status" value="1"/>
</dbReference>
<dbReference type="Pfam" id="PF00905">
    <property type="entry name" value="Transpeptidase"/>
    <property type="match status" value="1"/>
</dbReference>
<dbReference type="SUPFAM" id="SSF56601">
    <property type="entry name" value="beta-lactamase/transpeptidase-like"/>
    <property type="match status" value="1"/>
</dbReference>
<dbReference type="SUPFAM" id="SSF53955">
    <property type="entry name" value="Lysozyme-like"/>
    <property type="match status" value="1"/>
</dbReference>
<sequence>MANVRKRRKKKNEHKALRLTFITLLMVFLFSCVAAAGVGLAMIKAAPPLDVDKVLNPSEPSVIYDDKNKLVDTVISDTYRTIVSYEDVPDNLKNAFISIEDERFFNHRGIDYKRVFGAFFRNISNKLKGKSALQGASTITQQLVRNTLLSQEVRIKRKVQEMYLSIQLEKKVSKEQILEAYMNTIPLGGSAYGIEAASKQYFGKSVKDLNLIESAFIAGLPQSPSTFYNAAMSQKNTERYINRTKLVLGKMREHNYISKEDFDKSMAYIDKNKIPLKTSNINISRLNYEWFSREIIKQVKKDLMNEYKISPTEADKTIMYGGLKIYGTMDKSLQDFSQNTLDNLDGILGINSKDYSGIIQPEASVSIVDYKTGNVKVLIGGRGKQPPLSFNRATEFYRAPGSTIKPLTVYGPAIDTKTSTAASSYNDAPVPEEIGKLYDKEPYNPKNSPNIYEGKMTLREALMKSKNVISVRIEHELGLKTGAEYGKKFGLTIDDSMDGTSMAALSLGQLSAKTGVSGTNTLGMAAAYGVFGNKGALSKPVVYKKVVDRTGKVLLENKYASSKVMSPEAAYILYDLLKGPVSYTPGATGMKANFGPMARGKTGTSNQSSDLWFAGLSPYYSAAVWIGKDDYSPFTNEFGRYIGSSDAALIWKLIMGEAHKNLEYKTIEKPAGVTEAYVCSKSGKIPSSSCPRDSIKLEYFIEGTIPGEICDYHTGIFNNNKDKDDDDDDKDKDKEDEEENKDEKNEDKKEAKDNTKNKDKDKKKDNDRKIDMDKKPDSSKRKRKMIKPQI</sequence>
<comment type="function">
    <text evidence="1">Cell wall formation. Synthesis of cross-linked peptidoglycan from the lipid intermediates. The enzyme has a penicillin-insensitive transglycosylase N-terminal domain (formation of linear glycan strands) and a penicillin-sensitive transpeptidase C-terminal domain (cross-linking of the peptide subunits).</text>
</comment>
<comment type="catalytic activity">
    <reaction evidence="2">
        <text>[GlcNAc-(1-&gt;4)-Mur2Ac(oyl-L-Ala-gamma-D-Glu-L-Lys-D-Ala-D-Ala)](n)-di-trans,octa-cis-undecaprenyl diphosphate + beta-D-GlcNAc-(1-&gt;4)-Mur2Ac(oyl-L-Ala-gamma-D-Glu-L-Lys-D-Ala-D-Ala)-di-trans,octa-cis-undecaprenyl diphosphate = [GlcNAc-(1-&gt;4)-Mur2Ac(oyl-L-Ala-gamma-D-Glu-L-Lys-D-Ala-D-Ala)](n+1)-di-trans,octa-cis-undecaprenyl diphosphate + di-trans,octa-cis-undecaprenyl diphosphate + H(+)</text>
        <dbReference type="Rhea" id="RHEA:23708"/>
        <dbReference type="Rhea" id="RHEA-COMP:9602"/>
        <dbReference type="Rhea" id="RHEA-COMP:9603"/>
        <dbReference type="ChEBI" id="CHEBI:15378"/>
        <dbReference type="ChEBI" id="CHEBI:58405"/>
        <dbReference type="ChEBI" id="CHEBI:60033"/>
        <dbReference type="ChEBI" id="CHEBI:78435"/>
        <dbReference type="EC" id="2.4.99.28"/>
    </reaction>
</comment>
<comment type="catalytic activity">
    <reaction evidence="2">
        <text>Preferential cleavage: (Ac)2-L-Lys-D-Ala-|-D-Ala. Also transpeptidation of peptidyl-alanyl moieties that are N-acyl substituents of D-alanine.</text>
        <dbReference type="EC" id="3.4.16.4"/>
    </reaction>
</comment>
<comment type="pathway">
    <text>Cell wall biogenesis; peptidoglycan biosynthesis.</text>
</comment>
<comment type="subcellular location">
    <subcellularLocation>
        <location evidence="6">Cell membrane</location>
        <topology evidence="6">Single-pass type II membrane protein</topology>
    </subcellularLocation>
</comment>
<comment type="similarity">
    <text evidence="6">In the N-terminal section; belongs to the glycosyltransferase 51 family.</text>
</comment>
<comment type="similarity">
    <text evidence="6">In the C-terminal section; belongs to the transpeptidase family.</text>
</comment>